<comment type="function">
    <text evidence="1">The UvrABC repair system catalyzes the recognition and processing of DNA lesions. UvrC both incises the 5' and 3' sides of the lesion. The N-terminal half is responsible for the 3' incision and the C-terminal half is responsible for the 5' incision.</text>
</comment>
<comment type="subunit">
    <text evidence="1">Interacts with UvrB in an incision complex.</text>
</comment>
<comment type="subcellular location">
    <subcellularLocation>
        <location evidence="1">Cytoplasm</location>
    </subcellularLocation>
</comment>
<comment type="similarity">
    <text evidence="1">Belongs to the UvrC family.</text>
</comment>
<gene>
    <name evidence="1" type="primary">uvrC</name>
    <name type="ordered locus">BcerKBAB4_4348</name>
</gene>
<dbReference type="EMBL" id="CP000903">
    <property type="protein sequence ID" value="ABY45507.1"/>
    <property type="molecule type" value="Genomic_DNA"/>
</dbReference>
<dbReference type="RefSeq" id="WP_002129304.1">
    <property type="nucleotide sequence ID" value="NC_010184.1"/>
</dbReference>
<dbReference type="SMR" id="A9VJI0"/>
<dbReference type="KEGG" id="bwe:BcerKBAB4_4348"/>
<dbReference type="eggNOG" id="COG0322">
    <property type="taxonomic scope" value="Bacteria"/>
</dbReference>
<dbReference type="HOGENOM" id="CLU_014841_3_2_9"/>
<dbReference type="Proteomes" id="UP000002154">
    <property type="component" value="Chromosome"/>
</dbReference>
<dbReference type="GO" id="GO:0005737">
    <property type="term" value="C:cytoplasm"/>
    <property type="evidence" value="ECO:0007669"/>
    <property type="project" value="UniProtKB-SubCell"/>
</dbReference>
<dbReference type="GO" id="GO:0009380">
    <property type="term" value="C:excinuclease repair complex"/>
    <property type="evidence" value="ECO:0007669"/>
    <property type="project" value="InterPro"/>
</dbReference>
<dbReference type="GO" id="GO:0003677">
    <property type="term" value="F:DNA binding"/>
    <property type="evidence" value="ECO:0007669"/>
    <property type="project" value="UniProtKB-UniRule"/>
</dbReference>
<dbReference type="GO" id="GO:0009381">
    <property type="term" value="F:excinuclease ABC activity"/>
    <property type="evidence" value="ECO:0007669"/>
    <property type="project" value="UniProtKB-UniRule"/>
</dbReference>
<dbReference type="GO" id="GO:0006289">
    <property type="term" value="P:nucleotide-excision repair"/>
    <property type="evidence" value="ECO:0007669"/>
    <property type="project" value="UniProtKB-UniRule"/>
</dbReference>
<dbReference type="GO" id="GO:0009432">
    <property type="term" value="P:SOS response"/>
    <property type="evidence" value="ECO:0007669"/>
    <property type="project" value="UniProtKB-UniRule"/>
</dbReference>
<dbReference type="CDD" id="cd10434">
    <property type="entry name" value="GIY-YIG_UvrC_Cho"/>
    <property type="match status" value="1"/>
</dbReference>
<dbReference type="FunFam" id="1.10.150.20:FF:000005">
    <property type="entry name" value="UvrABC system protein C"/>
    <property type="match status" value="1"/>
</dbReference>
<dbReference type="FunFam" id="3.30.420.340:FF:000002">
    <property type="entry name" value="UvrABC system protein C"/>
    <property type="match status" value="1"/>
</dbReference>
<dbReference type="FunFam" id="3.40.1440.10:FF:000001">
    <property type="entry name" value="UvrABC system protein C"/>
    <property type="match status" value="1"/>
</dbReference>
<dbReference type="FunFam" id="4.10.860.10:FF:000002">
    <property type="entry name" value="UvrABC system protein C"/>
    <property type="match status" value="1"/>
</dbReference>
<dbReference type="Gene3D" id="1.10.150.20">
    <property type="entry name" value="5' to 3' exonuclease, C-terminal subdomain"/>
    <property type="match status" value="1"/>
</dbReference>
<dbReference type="Gene3D" id="3.40.1440.10">
    <property type="entry name" value="GIY-YIG endonuclease"/>
    <property type="match status" value="1"/>
</dbReference>
<dbReference type="Gene3D" id="4.10.860.10">
    <property type="entry name" value="UVR domain"/>
    <property type="match status" value="1"/>
</dbReference>
<dbReference type="Gene3D" id="3.30.420.340">
    <property type="entry name" value="UvrC, RNAse H endonuclease domain"/>
    <property type="match status" value="1"/>
</dbReference>
<dbReference type="HAMAP" id="MF_00203">
    <property type="entry name" value="UvrC"/>
    <property type="match status" value="1"/>
</dbReference>
<dbReference type="InterPro" id="IPR000305">
    <property type="entry name" value="GIY-YIG_endonuc"/>
</dbReference>
<dbReference type="InterPro" id="IPR035901">
    <property type="entry name" value="GIY-YIG_endonuc_sf"/>
</dbReference>
<dbReference type="InterPro" id="IPR047296">
    <property type="entry name" value="GIY-YIG_UvrC_Cho"/>
</dbReference>
<dbReference type="InterPro" id="IPR010994">
    <property type="entry name" value="RuvA_2-like"/>
</dbReference>
<dbReference type="InterPro" id="IPR001943">
    <property type="entry name" value="UVR_dom"/>
</dbReference>
<dbReference type="InterPro" id="IPR036876">
    <property type="entry name" value="UVR_dom_sf"/>
</dbReference>
<dbReference type="InterPro" id="IPR050066">
    <property type="entry name" value="UvrABC_protein_C"/>
</dbReference>
<dbReference type="InterPro" id="IPR004791">
    <property type="entry name" value="UvrC"/>
</dbReference>
<dbReference type="InterPro" id="IPR001162">
    <property type="entry name" value="UvrC_RNase_H_dom"/>
</dbReference>
<dbReference type="InterPro" id="IPR038476">
    <property type="entry name" value="UvrC_RNase_H_dom_sf"/>
</dbReference>
<dbReference type="NCBIfam" id="NF001824">
    <property type="entry name" value="PRK00558.1-5"/>
    <property type="match status" value="1"/>
</dbReference>
<dbReference type="NCBIfam" id="TIGR00194">
    <property type="entry name" value="uvrC"/>
    <property type="match status" value="1"/>
</dbReference>
<dbReference type="PANTHER" id="PTHR30562:SF1">
    <property type="entry name" value="UVRABC SYSTEM PROTEIN C"/>
    <property type="match status" value="1"/>
</dbReference>
<dbReference type="PANTHER" id="PTHR30562">
    <property type="entry name" value="UVRC/OXIDOREDUCTASE"/>
    <property type="match status" value="1"/>
</dbReference>
<dbReference type="Pfam" id="PF01541">
    <property type="entry name" value="GIY-YIG"/>
    <property type="match status" value="1"/>
</dbReference>
<dbReference type="Pfam" id="PF02151">
    <property type="entry name" value="UVR"/>
    <property type="match status" value="1"/>
</dbReference>
<dbReference type="Pfam" id="PF22920">
    <property type="entry name" value="UvrC_RNaseH"/>
    <property type="match status" value="1"/>
</dbReference>
<dbReference type="Pfam" id="PF08459">
    <property type="entry name" value="UvrC_RNaseH_dom"/>
    <property type="match status" value="1"/>
</dbReference>
<dbReference type="SMART" id="SM00465">
    <property type="entry name" value="GIYc"/>
    <property type="match status" value="1"/>
</dbReference>
<dbReference type="SUPFAM" id="SSF46600">
    <property type="entry name" value="C-terminal UvrC-binding domain of UvrB"/>
    <property type="match status" value="1"/>
</dbReference>
<dbReference type="SUPFAM" id="SSF82771">
    <property type="entry name" value="GIY-YIG endonuclease"/>
    <property type="match status" value="1"/>
</dbReference>
<dbReference type="SUPFAM" id="SSF47781">
    <property type="entry name" value="RuvA domain 2-like"/>
    <property type="match status" value="1"/>
</dbReference>
<dbReference type="PROSITE" id="PS50164">
    <property type="entry name" value="GIY_YIG"/>
    <property type="match status" value="1"/>
</dbReference>
<dbReference type="PROSITE" id="PS50151">
    <property type="entry name" value="UVR"/>
    <property type="match status" value="1"/>
</dbReference>
<dbReference type="PROSITE" id="PS50165">
    <property type="entry name" value="UVRC"/>
    <property type="match status" value="1"/>
</dbReference>
<feature type="chain" id="PRO_1000099458" description="UvrABC system protein C">
    <location>
        <begin position="1"/>
        <end position="594"/>
    </location>
</feature>
<feature type="domain" description="GIY-YIG" evidence="1">
    <location>
        <begin position="14"/>
        <end position="91"/>
    </location>
</feature>
<feature type="domain" description="UVR" evidence="1">
    <location>
        <begin position="196"/>
        <end position="231"/>
    </location>
</feature>
<sequence length="594" mass="68429">MHEHLKEKLAILPDQPGCYLMKDKQGTVIYVGKAKVLKNRVRSYFTGSHDGKTLRLVGEIVDFEYIVTSSNLEALILELNLIKKYDPKYNIQLKDDKTYPFIKITAEKQPRLLITRNVKKDKGKYFGPYPNAQSAHETKKLLDRMYPLRKCSNMPDKVCLYYHMGQCLAPCVKEVTDEQNKEIVDEIIKFLNGGHKEIRSELETKMYEASEKLEFERAKELRDQIAHIDAIMEKQKMIMSDLVDRDVFGYAVDKGWMCVQVFFVRKGKLIERDVSMFPIYDEPEEGFLTFIGQFYENSSHFKPKEIVVPGSIDSELVERFLEVEATQPKRGKKKDLVELANKNAKIALEEKFHLIERDEERTVKAIDNLGKQLGIETPYRIEAFDNSNIQGTNPVSAMIAFIDGKPAKKEYRKYKIKTVQGPDDYESMREVVRRRYTRALKENLPLPDLIIIDGGKGHLAATSDVLENELGLYIPMAGLVKDDKHKTSHLIIGDPPEPVMLERNSQEFYLLQRIQDEVHRFAITFHRQLHGKSVIQSALDDIPGIGDKRKKVLLKHFGSLKKMKEASIAEFVEAGMPKNVAEMIYTYLTDKKTL</sequence>
<proteinExistence type="inferred from homology"/>
<name>UVRC_BACMK</name>
<protein>
    <recommendedName>
        <fullName evidence="1">UvrABC system protein C</fullName>
        <shortName evidence="1">Protein UvrC</shortName>
    </recommendedName>
    <alternativeName>
        <fullName evidence="1">Excinuclease ABC subunit C</fullName>
    </alternativeName>
</protein>
<evidence type="ECO:0000255" key="1">
    <source>
        <dbReference type="HAMAP-Rule" id="MF_00203"/>
    </source>
</evidence>
<keyword id="KW-0963">Cytoplasm</keyword>
<keyword id="KW-0227">DNA damage</keyword>
<keyword id="KW-0228">DNA excision</keyword>
<keyword id="KW-0234">DNA repair</keyword>
<keyword id="KW-0267">Excision nuclease</keyword>
<keyword id="KW-0742">SOS response</keyword>
<reference key="1">
    <citation type="journal article" date="2008" name="Chem. Biol. Interact.">
        <title>Extending the Bacillus cereus group genomics to putative food-borne pathogens of different toxicity.</title>
        <authorList>
            <person name="Lapidus A."/>
            <person name="Goltsman E."/>
            <person name="Auger S."/>
            <person name="Galleron N."/>
            <person name="Segurens B."/>
            <person name="Dossat C."/>
            <person name="Land M.L."/>
            <person name="Broussolle V."/>
            <person name="Brillard J."/>
            <person name="Guinebretiere M.-H."/>
            <person name="Sanchis V."/>
            <person name="Nguen-the C."/>
            <person name="Lereclus D."/>
            <person name="Richardson P."/>
            <person name="Wincker P."/>
            <person name="Weissenbach J."/>
            <person name="Ehrlich S.D."/>
            <person name="Sorokin A."/>
        </authorList>
    </citation>
    <scope>NUCLEOTIDE SEQUENCE [LARGE SCALE GENOMIC DNA]</scope>
    <source>
        <strain>KBAB4</strain>
    </source>
</reference>
<organism>
    <name type="scientific">Bacillus mycoides (strain KBAB4)</name>
    <name type="common">Bacillus weihenstephanensis</name>
    <dbReference type="NCBI Taxonomy" id="315730"/>
    <lineage>
        <taxon>Bacteria</taxon>
        <taxon>Bacillati</taxon>
        <taxon>Bacillota</taxon>
        <taxon>Bacilli</taxon>
        <taxon>Bacillales</taxon>
        <taxon>Bacillaceae</taxon>
        <taxon>Bacillus</taxon>
        <taxon>Bacillus cereus group</taxon>
    </lineage>
</organism>
<accession>A9VJI0</accession>